<dbReference type="EC" id="2.7.2.7" evidence="1"/>
<dbReference type="EMBL" id="CP001055">
    <property type="protein sequence ID" value="ACC98916.1"/>
    <property type="molecule type" value="Genomic_DNA"/>
</dbReference>
<dbReference type="RefSeq" id="WP_012415531.1">
    <property type="nucleotide sequence ID" value="NC_010644.1"/>
</dbReference>
<dbReference type="SMR" id="B2KEH0"/>
<dbReference type="STRING" id="445932.Emin_1366"/>
<dbReference type="KEGG" id="emi:Emin_1366"/>
<dbReference type="HOGENOM" id="CLU_048716_0_0_0"/>
<dbReference type="OrthoDB" id="9771859at2"/>
<dbReference type="Proteomes" id="UP000001029">
    <property type="component" value="Chromosome"/>
</dbReference>
<dbReference type="GO" id="GO:0005737">
    <property type="term" value="C:cytoplasm"/>
    <property type="evidence" value="ECO:0007669"/>
    <property type="project" value="UniProtKB-SubCell"/>
</dbReference>
<dbReference type="GO" id="GO:0008776">
    <property type="term" value="F:acetate kinase activity"/>
    <property type="evidence" value="ECO:0007669"/>
    <property type="project" value="TreeGrafter"/>
</dbReference>
<dbReference type="GO" id="GO:0005524">
    <property type="term" value="F:ATP binding"/>
    <property type="evidence" value="ECO:0007669"/>
    <property type="project" value="UniProtKB-KW"/>
</dbReference>
<dbReference type="GO" id="GO:0047761">
    <property type="term" value="F:butyrate kinase activity"/>
    <property type="evidence" value="ECO:0007669"/>
    <property type="project" value="UniProtKB-UniRule"/>
</dbReference>
<dbReference type="GO" id="GO:0006083">
    <property type="term" value="P:acetate metabolic process"/>
    <property type="evidence" value="ECO:0007669"/>
    <property type="project" value="TreeGrafter"/>
</dbReference>
<dbReference type="CDD" id="cd24011">
    <property type="entry name" value="ASKHA_NBD_BK"/>
    <property type="match status" value="1"/>
</dbReference>
<dbReference type="Gene3D" id="3.30.420.40">
    <property type="match status" value="2"/>
</dbReference>
<dbReference type="HAMAP" id="MF_00542">
    <property type="entry name" value="Butyrate_kinase"/>
    <property type="match status" value="1"/>
</dbReference>
<dbReference type="InterPro" id="IPR000890">
    <property type="entry name" value="Aliphatic_acid_kin_short-chain"/>
</dbReference>
<dbReference type="InterPro" id="IPR023865">
    <property type="entry name" value="Aliphatic_acid_kinase_CS"/>
</dbReference>
<dbReference type="InterPro" id="IPR043129">
    <property type="entry name" value="ATPase_NBD"/>
</dbReference>
<dbReference type="InterPro" id="IPR011245">
    <property type="entry name" value="Butyrate_kin"/>
</dbReference>
<dbReference type="NCBIfam" id="TIGR02707">
    <property type="entry name" value="butyr_kinase"/>
    <property type="match status" value="1"/>
</dbReference>
<dbReference type="NCBIfam" id="NF002834">
    <property type="entry name" value="PRK03011.1-5"/>
    <property type="match status" value="1"/>
</dbReference>
<dbReference type="PANTHER" id="PTHR21060">
    <property type="entry name" value="ACETATE KINASE"/>
    <property type="match status" value="1"/>
</dbReference>
<dbReference type="PANTHER" id="PTHR21060:SF3">
    <property type="entry name" value="BUTYRATE KINASE 2-RELATED"/>
    <property type="match status" value="1"/>
</dbReference>
<dbReference type="Pfam" id="PF00871">
    <property type="entry name" value="Acetate_kinase"/>
    <property type="match status" value="1"/>
</dbReference>
<dbReference type="PIRSF" id="PIRSF036458">
    <property type="entry name" value="Butyrate_kin"/>
    <property type="match status" value="1"/>
</dbReference>
<dbReference type="PRINTS" id="PR00471">
    <property type="entry name" value="ACETATEKNASE"/>
</dbReference>
<dbReference type="SUPFAM" id="SSF53067">
    <property type="entry name" value="Actin-like ATPase domain"/>
    <property type="match status" value="2"/>
</dbReference>
<dbReference type="PROSITE" id="PS01076">
    <property type="entry name" value="ACETATE_KINASE_2"/>
    <property type="match status" value="1"/>
</dbReference>
<evidence type="ECO:0000255" key="1">
    <source>
        <dbReference type="HAMAP-Rule" id="MF_00542"/>
    </source>
</evidence>
<name>BUK_ELUMP</name>
<gene>
    <name evidence="1" type="primary">buk</name>
    <name type="ordered locus">Emin_1366</name>
</gene>
<reference key="1">
    <citation type="journal article" date="2009" name="Appl. Environ. Microbiol.">
        <title>Genomic analysis of 'Elusimicrobium minutum,' the first cultivated representative of the phylum 'Elusimicrobia' (formerly termite group 1).</title>
        <authorList>
            <person name="Herlemann D.P.R."/>
            <person name="Geissinger O."/>
            <person name="Ikeda-Ohtsubo W."/>
            <person name="Kunin V."/>
            <person name="Sun H."/>
            <person name="Lapidus A."/>
            <person name="Hugenholtz P."/>
            <person name="Brune A."/>
        </authorList>
    </citation>
    <scope>NUCLEOTIDE SEQUENCE [LARGE SCALE GENOMIC DNA]</scope>
    <source>
        <strain>Pei191</strain>
    </source>
</reference>
<protein>
    <recommendedName>
        <fullName evidence="1">Probable butyrate kinase</fullName>
        <shortName evidence="1">BK</shortName>
        <ecNumber evidence="1">2.7.2.7</ecNumber>
    </recommendedName>
    <alternativeName>
        <fullName evidence="1">Branched-chain carboxylic acid kinase</fullName>
    </alternativeName>
</protein>
<comment type="catalytic activity">
    <reaction evidence="1">
        <text>butanoate + ATP = butanoyl phosphate + ADP</text>
        <dbReference type="Rhea" id="RHEA:13585"/>
        <dbReference type="ChEBI" id="CHEBI:17968"/>
        <dbReference type="ChEBI" id="CHEBI:30616"/>
        <dbReference type="ChEBI" id="CHEBI:58079"/>
        <dbReference type="ChEBI" id="CHEBI:456216"/>
        <dbReference type="EC" id="2.7.2.7"/>
    </reaction>
</comment>
<comment type="subcellular location">
    <subcellularLocation>
        <location evidence="1">Cytoplasm</location>
    </subcellularLocation>
</comment>
<comment type="similarity">
    <text evidence="1">Belongs to the acetokinase family.</text>
</comment>
<organism>
    <name type="scientific">Elusimicrobium minutum (strain Pei191)</name>
    <dbReference type="NCBI Taxonomy" id="445932"/>
    <lineage>
        <taxon>Bacteria</taxon>
        <taxon>Pseudomonadati</taxon>
        <taxon>Elusimicrobiota</taxon>
        <taxon>Elusimicrobia</taxon>
        <taxon>Elusimicrobiales</taxon>
        <taxon>Elusimicrobiaceae</taxon>
        <taxon>Elusimicrobium</taxon>
    </lineage>
</organism>
<sequence>MEHNILVINPGSTSDDIGYYKGPKTVFEESARYSQEELDSFAGKELSEQIPLRRKFLLDVLKKHEINLNEIDAVIGRGGLLKHIEGGIYTINEAMLADLKRGYNGHHPSNLGGILAREIAESLGKPCFIADPVVVDEMEPLARYTGFKEIKRKSIFHALNQKRVAITAAKELGKKYKECNFIVMHGGGGVSVGAHKKGKVIDVSDGFEGAGPMTPQRSGVLPSLELVEMCFSGQYTIQELRKKMRGRGGMIAHTGTSDIADLYNYISSGKKKPGSTINCSREAAQEAFDAMIYQISKEIGAMATVLKGDVDAIILTGGLAYNEYLVNMIKERTGFITDKFFVYPGGDEKAALKEAAARALENPEIIKQYK</sequence>
<accession>B2KEH0</accession>
<feature type="chain" id="PRO_1000128905" description="Probable butyrate kinase">
    <location>
        <begin position="1"/>
        <end position="370"/>
    </location>
</feature>
<keyword id="KW-0067">ATP-binding</keyword>
<keyword id="KW-0963">Cytoplasm</keyword>
<keyword id="KW-0418">Kinase</keyword>
<keyword id="KW-0547">Nucleotide-binding</keyword>
<keyword id="KW-1185">Reference proteome</keyword>
<keyword id="KW-0808">Transferase</keyword>
<proteinExistence type="inferred from homology"/>